<keyword id="KW-0414">Isoprene biosynthesis</keyword>
<keyword id="KW-0460">Magnesium</keyword>
<keyword id="KW-0479">Metal-binding</keyword>
<keyword id="KW-0784">Thiamine biosynthesis</keyword>
<keyword id="KW-0786">Thiamine pyrophosphate</keyword>
<keyword id="KW-0808">Transferase</keyword>
<comment type="function">
    <text evidence="1">Catalyzes the acyloin condensation reaction between C atoms 2 and 3 of pyruvate and glyceraldehyde 3-phosphate to yield 1-deoxy-D-xylulose-5-phosphate (DXP).</text>
</comment>
<comment type="catalytic activity">
    <reaction evidence="1">
        <text>D-glyceraldehyde 3-phosphate + pyruvate + H(+) = 1-deoxy-D-xylulose 5-phosphate + CO2</text>
        <dbReference type="Rhea" id="RHEA:12605"/>
        <dbReference type="ChEBI" id="CHEBI:15361"/>
        <dbReference type="ChEBI" id="CHEBI:15378"/>
        <dbReference type="ChEBI" id="CHEBI:16526"/>
        <dbReference type="ChEBI" id="CHEBI:57792"/>
        <dbReference type="ChEBI" id="CHEBI:59776"/>
        <dbReference type="EC" id="2.2.1.7"/>
    </reaction>
</comment>
<comment type="cofactor">
    <cofactor evidence="1">
        <name>Mg(2+)</name>
        <dbReference type="ChEBI" id="CHEBI:18420"/>
    </cofactor>
    <text evidence="1">Binds 1 Mg(2+) ion per subunit.</text>
</comment>
<comment type="cofactor">
    <cofactor evidence="1">
        <name>thiamine diphosphate</name>
        <dbReference type="ChEBI" id="CHEBI:58937"/>
    </cofactor>
    <text evidence="1">Binds 1 thiamine pyrophosphate per subunit.</text>
</comment>
<comment type="pathway">
    <text evidence="1">Metabolic intermediate biosynthesis; 1-deoxy-D-xylulose 5-phosphate biosynthesis; 1-deoxy-D-xylulose 5-phosphate from D-glyceraldehyde 3-phosphate and pyruvate: step 1/1.</text>
</comment>
<comment type="subunit">
    <text evidence="1">Homodimer.</text>
</comment>
<comment type="similarity">
    <text evidence="1">Belongs to the transketolase family. DXPS subfamily.</text>
</comment>
<reference key="1">
    <citation type="journal article" date="2010" name="J. Bacteriol.">
        <title>Whole genome sequences of two Xylella fastidiosa strains (M12 and M23) causing almond leaf scorch disease in California.</title>
        <authorList>
            <person name="Chen J."/>
            <person name="Xie G."/>
            <person name="Han S."/>
            <person name="Chertkov O."/>
            <person name="Sims D."/>
            <person name="Civerolo E.L."/>
        </authorList>
    </citation>
    <scope>NUCLEOTIDE SEQUENCE [LARGE SCALE GENOMIC DNA]</scope>
    <source>
        <strain>M23</strain>
    </source>
</reference>
<feature type="chain" id="PRO_1000115782" description="1-deoxy-D-xylulose-5-phosphate synthase">
    <location>
        <begin position="1"/>
        <end position="635"/>
    </location>
</feature>
<feature type="binding site" evidence="1">
    <location>
        <position position="79"/>
    </location>
    <ligand>
        <name>thiamine diphosphate</name>
        <dbReference type="ChEBI" id="CHEBI:58937"/>
    </ligand>
</feature>
<feature type="binding site" evidence="1">
    <location>
        <begin position="120"/>
        <end position="122"/>
    </location>
    <ligand>
        <name>thiamine diphosphate</name>
        <dbReference type="ChEBI" id="CHEBI:58937"/>
    </ligand>
</feature>
<feature type="binding site" evidence="1">
    <location>
        <position position="151"/>
    </location>
    <ligand>
        <name>Mg(2+)</name>
        <dbReference type="ChEBI" id="CHEBI:18420"/>
    </ligand>
</feature>
<feature type="binding site" evidence="1">
    <location>
        <begin position="152"/>
        <end position="153"/>
    </location>
    <ligand>
        <name>thiamine diphosphate</name>
        <dbReference type="ChEBI" id="CHEBI:58937"/>
    </ligand>
</feature>
<feature type="binding site" evidence="1">
    <location>
        <position position="182"/>
    </location>
    <ligand>
        <name>Mg(2+)</name>
        <dbReference type="ChEBI" id="CHEBI:18420"/>
    </ligand>
</feature>
<feature type="binding site" evidence="1">
    <location>
        <position position="182"/>
    </location>
    <ligand>
        <name>thiamine diphosphate</name>
        <dbReference type="ChEBI" id="CHEBI:58937"/>
    </ligand>
</feature>
<feature type="binding site" evidence="1">
    <location>
        <position position="291"/>
    </location>
    <ligand>
        <name>thiamine diphosphate</name>
        <dbReference type="ChEBI" id="CHEBI:58937"/>
    </ligand>
</feature>
<feature type="binding site" evidence="1">
    <location>
        <position position="372"/>
    </location>
    <ligand>
        <name>thiamine diphosphate</name>
        <dbReference type="ChEBI" id="CHEBI:58937"/>
    </ligand>
</feature>
<gene>
    <name evidence="1" type="primary">dxs</name>
    <name type="ordered locus">XfasM23_1378</name>
</gene>
<accession>B2I607</accession>
<proteinExistence type="inferred from homology"/>
<protein>
    <recommendedName>
        <fullName evidence="1">1-deoxy-D-xylulose-5-phosphate synthase</fullName>
        <ecNumber evidence="1">2.2.1.7</ecNumber>
    </recommendedName>
    <alternativeName>
        <fullName evidence="1">1-deoxyxylulose-5-phosphate synthase</fullName>
        <shortName evidence="1">DXP synthase</shortName>
        <shortName evidence="1">DXPS</shortName>
    </alternativeName>
</protein>
<sequence>MIDFTCYPRLSRIQTPEDLRAFQESELRAVADELRNYLIESVGLSGGHFAAGLGVVELTIALHYLYCTPIDQLVWDVGHQTYPHKILTGRRDKISTVKHQGGLAPFPKREESIYDTFGVGHSSTSISAALGMAIVAQRNGDERKVVAIIGDGAMTAGMAYEALNHAGGMSPAPNLLVILNDNRMSISEAVGGLTKMLGRATGSKALNAIREGGKRIFGDKKTNATARFLRRWEEHWKGMFVPSTLFEEMGFHYTGPIDGHDLPALLGALKTLRTLKGPQLLHVITTKGKGYELAEGDQIGYHAVAPFDPQKGLIKAGAKKQTYTDVFSEWLCDMAAVEPRLLAITPAMREGSGLVRFSQEYPQRYFDVAIAEQHAITLAAGMATQGAKPVVAIYSTFLQRGYDQLVHDVALQKLDVLFAVDRGGVVGPDGATHAGNLDLSFLRCVPNMMLMAPADEAECRKMLSTGFHYSGPVAVRYPRGTGPGVVPSAELDVLPVGVAQLRHSGTRIALLGFGVCVAPAEQVGRRLGLTVVNMRFIKPLDRTLLLELARTHEVFVTIEDNVVAGGAGSGVAELLNAEGIVLPIVHLGLPDAFQQHASREDLLAEAGIDAAGVYAALLSRWPDLAVQNHPLSAVS</sequence>
<dbReference type="EC" id="2.2.1.7" evidence="1"/>
<dbReference type="EMBL" id="CP001011">
    <property type="protein sequence ID" value="ACB92796.1"/>
    <property type="molecule type" value="Genomic_DNA"/>
</dbReference>
<dbReference type="RefSeq" id="WP_004088288.1">
    <property type="nucleotide sequence ID" value="NC_010577.1"/>
</dbReference>
<dbReference type="SMR" id="B2I607"/>
<dbReference type="GeneID" id="93905107"/>
<dbReference type="KEGG" id="xfn:XfasM23_1378"/>
<dbReference type="HOGENOM" id="CLU_009227_1_4_6"/>
<dbReference type="UniPathway" id="UPA00064">
    <property type="reaction ID" value="UER00091"/>
</dbReference>
<dbReference type="Proteomes" id="UP000001698">
    <property type="component" value="Chromosome"/>
</dbReference>
<dbReference type="GO" id="GO:0005829">
    <property type="term" value="C:cytosol"/>
    <property type="evidence" value="ECO:0007669"/>
    <property type="project" value="TreeGrafter"/>
</dbReference>
<dbReference type="GO" id="GO:0008661">
    <property type="term" value="F:1-deoxy-D-xylulose-5-phosphate synthase activity"/>
    <property type="evidence" value="ECO:0007669"/>
    <property type="project" value="UniProtKB-UniRule"/>
</dbReference>
<dbReference type="GO" id="GO:0000287">
    <property type="term" value="F:magnesium ion binding"/>
    <property type="evidence" value="ECO:0007669"/>
    <property type="project" value="UniProtKB-UniRule"/>
</dbReference>
<dbReference type="GO" id="GO:0030976">
    <property type="term" value="F:thiamine pyrophosphate binding"/>
    <property type="evidence" value="ECO:0007669"/>
    <property type="project" value="UniProtKB-UniRule"/>
</dbReference>
<dbReference type="GO" id="GO:0052865">
    <property type="term" value="P:1-deoxy-D-xylulose 5-phosphate biosynthetic process"/>
    <property type="evidence" value="ECO:0007669"/>
    <property type="project" value="UniProtKB-UniPathway"/>
</dbReference>
<dbReference type="GO" id="GO:0019288">
    <property type="term" value="P:isopentenyl diphosphate biosynthetic process, methylerythritol 4-phosphate pathway"/>
    <property type="evidence" value="ECO:0007669"/>
    <property type="project" value="TreeGrafter"/>
</dbReference>
<dbReference type="GO" id="GO:0016114">
    <property type="term" value="P:terpenoid biosynthetic process"/>
    <property type="evidence" value="ECO:0007669"/>
    <property type="project" value="UniProtKB-UniRule"/>
</dbReference>
<dbReference type="GO" id="GO:0009228">
    <property type="term" value="P:thiamine biosynthetic process"/>
    <property type="evidence" value="ECO:0007669"/>
    <property type="project" value="UniProtKB-UniRule"/>
</dbReference>
<dbReference type="CDD" id="cd02007">
    <property type="entry name" value="TPP_DXS"/>
    <property type="match status" value="1"/>
</dbReference>
<dbReference type="CDD" id="cd07033">
    <property type="entry name" value="TPP_PYR_DXS_TK_like"/>
    <property type="match status" value="1"/>
</dbReference>
<dbReference type="FunFam" id="3.40.50.920:FF:000002">
    <property type="entry name" value="1-deoxy-D-xylulose-5-phosphate synthase"/>
    <property type="match status" value="1"/>
</dbReference>
<dbReference type="FunFam" id="3.40.50.970:FF:000005">
    <property type="entry name" value="1-deoxy-D-xylulose-5-phosphate synthase"/>
    <property type="match status" value="1"/>
</dbReference>
<dbReference type="Gene3D" id="3.40.50.920">
    <property type="match status" value="1"/>
</dbReference>
<dbReference type="Gene3D" id="3.40.50.970">
    <property type="match status" value="2"/>
</dbReference>
<dbReference type="HAMAP" id="MF_00315">
    <property type="entry name" value="DXP_synth"/>
    <property type="match status" value="1"/>
</dbReference>
<dbReference type="InterPro" id="IPR005477">
    <property type="entry name" value="Dxylulose-5-P_synthase"/>
</dbReference>
<dbReference type="InterPro" id="IPR029061">
    <property type="entry name" value="THDP-binding"/>
</dbReference>
<dbReference type="InterPro" id="IPR009014">
    <property type="entry name" value="Transketo_C/PFOR_II"/>
</dbReference>
<dbReference type="InterPro" id="IPR005475">
    <property type="entry name" value="Transketolase-like_Pyr-bd"/>
</dbReference>
<dbReference type="InterPro" id="IPR020826">
    <property type="entry name" value="Transketolase_BS"/>
</dbReference>
<dbReference type="InterPro" id="IPR033248">
    <property type="entry name" value="Transketolase_C"/>
</dbReference>
<dbReference type="InterPro" id="IPR049557">
    <property type="entry name" value="Transketolase_CS"/>
</dbReference>
<dbReference type="NCBIfam" id="TIGR00204">
    <property type="entry name" value="dxs"/>
    <property type="match status" value="1"/>
</dbReference>
<dbReference type="NCBIfam" id="NF003933">
    <property type="entry name" value="PRK05444.2-2"/>
    <property type="match status" value="1"/>
</dbReference>
<dbReference type="PANTHER" id="PTHR43322">
    <property type="entry name" value="1-D-DEOXYXYLULOSE 5-PHOSPHATE SYNTHASE-RELATED"/>
    <property type="match status" value="1"/>
</dbReference>
<dbReference type="PANTHER" id="PTHR43322:SF5">
    <property type="entry name" value="1-DEOXY-D-XYLULOSE-5-PHOSPHATE SYNTHASE, CHLOROPLASTIC"/>
    <property type="match status" value="1"/>
</dbReference>
<dbReference type="Pfam" id="PF13292">
    <property type="entry name" value="DXP_synthase_N"/>
    <property type="match status" value="1"/>
</dbReference>
<dbReference type="Pfam" id="PF02779">
    <property type="entry name" value="Transket_pyr"/>
    <property type="match status" value="1"/>
</dbReference>
<dbReference type="Pfam" id="PF02780">
    <property type="entry name" value="Transketolase_C"/>
    <property type="match status" value="1"/>
</dbReference>
<dbReference type="SMART" id="SM00861">
    <property type="entry name" value="Transket_pyr"/>
    <property type="match status" value="1"/>
</dbReference>
<dbReference type="SUPFAM" id="SSF52518">
    <property type="entry name" value="Thiamin diphosphate-binding fold (THDP-binding)"/>
    <property type="match status" value="2"/>
</dbReference>
<dbReference type="SUPFAM" id="SSF52922">
    <property type="entry name" value="TK C-terminal domain-like"/>
    <property type="match status" value="1"/>
</dbReference>
<dbReference type="PROSITE" id="PS00801">
    <property type="entry name" value="TRANSKETOLASE_1"/>
    <property type="match status" value="1"/>
</dbReference>
<dbReference type="PROSITE" id="PS00802">
    <property type="entry name" value="TRANSKETOLASE_2"/>
    <property type="match status" value="1"/>
</dbReference>
<organism>
    <name type="scientific">Xylella fastidiosa (strain M23)</name>
    <dbReference type="NCBI Taxonomy" id="405441"/>
    <lineage>
        <taxon>Bacteria</taxon>
        <taxon>Pseudomonadati</taxon>
        <taxon>Pseudomonadota</taxon>
        <taxon>Gammaproteobacteria</taxon>
        <taxon>Lysobacterales</taxon>
        <taxon>Lysobacteraceae</taxon>
        <taxon>Xylella</taxon>
    </lineage>
</organism>
<name>DXS_XYLF2</name>
<evidence type="ECO:0000255" key="1">
    <source>
        <dbReference type="HAMAP-Rule" id="MF_00315"/>
    </source>
</evidence>